<feature type="chain" id="PRO_0000090195" description="Triosephosphate isomerase">
    <location>
        <begin position="1"/>
        <end position="255"/>
    </location>
</feature>
<feature type="active site" description="Electrophile" evidence="1">
    <location>
        <position position="96"/>
    </location>
</feature>
<feature type="active site" description="Proton acceptor" evidence="1">
    <location>
        <position position="168"/>
    </location>
</feature>
<feature type="binding site" evidence="1">
    <location>
        <begin position="9"/>
        <end position="11"/>
    </location>
    <ligand>
        <name>substrate</name>
    </ligand>
</feature>
<feature type="binding site" evidence="1">
    <location>
        <position position="174"/>
    </location>
    <ligand>
        <name>substrate</name>
    </ligand>
</feature>
<feature type="binding site" evidence="1">
    <location>
        <position position="213"/>
    </location>
    <ligand>
        <name>substrate</name>
    </ligand>
</feature>
<name>TPIS_BUCAI</name>
<accession>P57393</accession>
<sequence>MKKFFITANWKLNGNIKMISSFFKYLKLYSSSYLEKNTVIIAPPTIYLERVCKNISNMNIFLGSQNVDINLNGAFTGETSILMLRDIGVKYVIIGHSERRFLHHETDDIIAKKFHLIKKSNLTPILCVGETEIEKKHNQTEQVIQRQLNLILKNLGTSAFKNIIIAYEPIWAIGTGVSADPEHVQLIHVFIKNYILKYSSINRNDIIIQYGGSINHTNVKKFIEQPDINGLLIGNSSLSAKEFLEIIKIAHEHYS</sequence>
<reference key="1">
    <citation type="journal article" date="2000" name="Nature">
        <title>Genome sequence of the endocellular bacterial symbiont of aphids Buchnera sp. APS.</title>
        <authorList>
            <person name="Shigenobu S."/>
            <person name="Watanabe H."/>
            <person name="Hattori M."/>
            <person name="Sakaki Y."/>
            <person name="Ishikawa H."/>
        </authorList>
    </citation>
    <scope>NUCLEOTIDE SEQUENCE [LARGE SCALE GENOMIC DNA]</scope>
    <source>
        <strain>APS</strain>
    </source>
</reference>
<protein>
    <recommendedName>
        <fullName evidence="1">Triosephosphate isomerase</fullName>
        <shortName evidence="1">TIM</shortName>
        <shortName evidence="1">TPI</shortName>
        <ecNumber evidence="1">5.3.1.1</ecNumber>
    </recommendedName>
    <alternativeName>
        <fullName evidence="1">Triose-phosphate isomerase</fullName>
    </alternativeName>
</protein>
<comment type="function">
    <text evidence="1">Involved in the gluconeogenesis. Catalyzes stereospecifically the conversion of dihydroxyacetone phosphate (DHAP) to D-glyceraldehyde-3-phosphate (G3P).</text>
</comment>
<comment type="catalytic activity">
    <reaction evidence="1">
        <text>D-glyceraldehyde 3-phosphate = dihydroxyacetone phosphate</text>
        <dbReference type="Rhea" id="RHEA:18585"/>
        <dbReference type="ChEBI" id="CHEBI:57642"/>
        <dbReference type="ChEBI" id="CHEBI:59776"/>
        <dbReference type="EC" id="5.3.1.1"/>
    </reaction>
</comment>
<comment type="pathway">
    <text evidence="1">Carbohydrate biosynthesis; gluconeogenesis.</text>
</comment>
<comment type="pathway">
    <text evidence="1">Carbohydrate degradation; glycolysis; D-glyceraldehyde 3-phosphate from glycerone phosphate: step 1/1.</text>
</comment>
<comment type="subunit">
    <text evidence="1">Homodimer.</text>
</comment>
<comment type="subcellular location">
    <subcellularLocation>
        <location evidence="1">Cytoplasm</location>
    </subcellularLocation>
</comment>
<comment type="similarity">
    <text evidence="1">Belongs to the triosephosphate isomerase family.</text>
</comment>
<dbReference type="EC" id="5.3.1.1" evidence="1"/>
<dbReference type="EMBL" id="BA000003">
    <property type="protein sequence ID" value="BAB13016.1"/>
    <property type="molecule type" value="Genomic_DNA"/>
</dbReference>
<dbReference type="RefSeq" id="NP_240130.1">
    <property type="nucleotide sequence ID" value="NC_002528.1"/>
</dbReference>
<dbReference type="RefSeq" id="WP_009874260.1">
    <property type="nucleotide sequence ID" value="NZ_AP036055.1"/>
</dbReference>
<dbReference type="SMR" id="P57393"/>
<dbReference type="STRING" id="563178.BUAP5A_301"/>
<dbReference type="EnsemblBacteria" id="BAB13016">
    <property type="protein sequence ID" value="BAB13016"/>
    <property type="gene ID" value="BAB13016"/>
</dbReference>
<dbReference type="KEGG" id="buc:BU307"/>
<dbReference type="PATRIC" id="fig|107806.10.peg.318"/>
<dbReference type="eggNOG" id="COG0149">
    <property type="taxonomic scope" value="Bacteria"/>
</dbReference>
<dbReference type="HOGENOM" id="CLU_024251_2_1_6"/>
<dbReference type="UniPathway" id="UPA00109">
    <property type="reaction ID" value="UER00189"/>
</dbReference>
<dbReference type="UniPathway" id="UPA00138"/>
<dbReference type="Proteomes" id="UP000001806">
    <property type="component" value="Chromosome"/>
</dbReference>
<dbReference type="GO" id="GO:0005829">
    <property type="term" value="C:cytosol"/>
    <property type="evidence" value="ECO:0007669"/>
    <property type="project" value="TreeGrafter"/>
</dbReference>
<dbReference type="GO" id="GO:0004807">
    <property type="term" value="F:triose-phosphate isomerase activity"/>
    <property type="evidence" value="ECO:0007669"/>
    <property type="project" value="UniProtKB-UniRule"/>
</dbReference>
<dbReference type="GO" id="GO:0006094">
    <property type="term" value="P:gluconeogenesis"/>
    <property type="evidence" value="ECO:0007669"/>
    <property type="project" value="UniProtKB-UniRule"/>
</dbReference>
<dbReference type="GO" id="GO:0046166">
    <property type="term" value="P:glyceraldehyde-3-phosphate biosynthetic process"/>
    <property type="evidence" value="ECO:0007669"/>
    <property type="project" value="TreeGrafter"/>
</dbReference>
<dbReference type="GO" id="GO:0019563">
    <property type="term" value="P:glycerol catabolic process"/>
    <property type="evidence" value="ECO:0007669"/>
    <property type="project" value="TreeGrafter"/>
</dbReference>
<dbReference type="GO" id="GO:0006096">
    <property type="term" value="P:glycolytic process"/>
    <property type="evidence" value="ECO:0007669"/>
    <property type="project" value="UniProtKB-UniRule"/>
</dbReference>
<dbReference type="CDD" id="cd00311">
    <property type="entry name" value="TIM"/>
    <property type="match status" value="1"/>
</dbReference>
<dbReference type="FunFam" id="3.20.20.70:FF:000016">
    <property type="entry name" value="Triosephosphate isomerase"/>
    <property type="match status" value="1"/>
</dbReference>
<dbReference type="Gene3D" id="3.20.20.70">
    <property type="entry name" value="Aldolase class I"/>
    <property type="match status" value="1"/>
</dbReference>
<dbReference type="HAMAP" id="MF_00147_B">
    <property type="entry name" value="TIM_B"/>
    <property type="match status" value="1"/>
</dbReference>
<dbReference type="InterPro" id="IPR013785">
    <property type="entry name" value="Aldolase_TIM"/>
</dbReference>
<dbReference type="InterPro" id="IPR035990">
    <property type="entry name" value="TIM_sf"/>
</dbReference>
<dbReference type="InterPro" id="IPR022896">
    <property type="entry name" value="TrioseP_Isoase_bac/euk"/>
</dbReference>
<dbReference type="InterPro" id="IPR000652">
    <property type="entry name" value="Triosephosphate_isomerase"/>
</dbReference>
<dbReference type="InterPro" id="IPR020861">
    <property type="entry name" value="Triosephosphate_isomerase_AS"/>
</dbReference>
<dbReference type="NCBIfam" id="TIGR00419">
    <property type="entry name" value="tim"/>
    <property type="match status" value="1"/>
</dbReference>
<dbReference type="PANTHER" id="PTHR21139">
    <property type="entry name" value="TRIOSEPHOSPHATE ISOMERASE"/>
    <property type="match status" value="1"/>
</dbReference>
<dbReference type="PANTHER" id="PTHR21139:SF42">
    <property type="entry name" value="TRIOSEPHOSPHATE ISOMERASE"/>
    <property type="match status" value="1"/>
</dbReference>
<dbReference type="Pfam" id="PF00121">
    <property type="entry name" value="TIM"/>
    <property type="match status" value="1"/>
</dbReference>
<dbReference type="SUPFAM" id="SSF51351">
    <property type="entry name" value="Triosephosphate isomerase (TIM)"/>
    <property type="match status" value="1"/>
</dbReference>
<dbReference type="PROSITE" id="PS00171">
    <property type="entry name" value="TIM_1"/>
    <property type="match status" value="1"/>
</dbReference>
<dbReference type="PROSITE" id="PS51440">
    <property type="entry name" value="TIM_2"/>
    <property type="match status" value="1"/>
</dbReference>
<organism>
    <name type="scientific">Buchnera aphidicola subsp. Acyrthosiphon pisum (strain APS)</name>
    <name type="common">Acyrthosiphon pisum symbiotic bacterium</name>
    <dbReference type="NCBI Taxonomy" id="107806"/>
    <lineage>
        <taxon>Bacteria</taxon>
        <taxon>Pseudomonadati</taxon>
        <taxon>Pseudomonadota</taxon>
        <taxon>Gammaproteobacteria</taxon>
        <taxon>Enterobacterales</taxon>
        <taxon>Erwiniaceae</taxon>
        <taxon>Buchnera</taxon>
    </lineage>
</organism>
<keyword id="KW-0963">Cytoplasm</keyword>
<keyword id="KW-0312">Gluconeogenesis</keyword>
<keyword id="KW-0324">Glycolysis</keyword>
<keyword id="KW-0413">Isomerase</keyword>
<keyword id="KW-1185">Reference proteome</keyword>
<evidence type="ECO:0000255" key="1">
    <source>
        <dbReference type="HAMAP-Rule" id="MF_00147"/>
    </source>
</evidence>
<proteinExistence type="inferred from homology"/>
<gene>
    <name evidence="1" type="primary">tpiA</name>
    <name type="ordered locus">BU307</name>
</gene>